<keyword id="KW-0145">Chemotaxis</keyword>
<keyword id="KW-0378">Hydrolase</keyword>
<organism>
    <name type="scientific">Methanosarcina mazei (strain ATCC BAA-159 / DSM 3647 / Goe1 / Go1 / JCM 11833 / OCM 88)</name>
    <name type="common">Methanosarcina frisia</name>
    <dbReference type="NCBI Taxonomy" id="192952"/>
    <lineage>
        <taxon>Archaea</taxon>
        <taxon>Methanobacteriati</taxon>
        <taxon>Methanobacteriota</taxon>
        <taxon>Stenosarchaea group</taxon>
        <taxon>Methanomicrobia</taxon>
        <taxon>Methanosarcinales</taxon>
        <taxon>Methanosarcinaceae</taxon>
        <taxon>Methanosarcina</taxon>
    </lineage>
</organism>
<comment type="function">
    <text evidence="1">Probably deamidates glutamine residues to glutamate on methyl-accepting chemotaxis receptors (MCPs), playing an important role in chemotaxis.</text>
</comment>
<comment type="catalytic activity">
    <reaction evidence="1">
        <text>L-glutaminyl-[protein] + H2O = L-glutamyl-[protein] + NH4(+)</text>
        <dbReference type="Rhea" id="RHEA:16441"/>
        <dbReference type="Rhea" id="RHEA-COMP:10207"/>
        <dbReference type="Rhea" id="RHEA-COMP:10208"/>
        <dbReference type="ChEBI" id="CHEBI:15377"/>
        <dbReference type="ChEBI" id="CHEBI:28938"/>
        <dbReference type="ChEBI" id="CHEBI:29973"/>
        <dbReference type="ChEBI" id="CHEBI:30011"/>
        <dbReference type="EC" id="3.5.1.44"/>
    </reaction>
</comment>
<comment type="similarity">
    <text evidence="1">Belongs to the CheD family.</text>
</comment>
<name>CHED1_METMA</name>
<proteinExistence type="inferred from homology"/>
<protein>
    <recommendedName>
        <fullName evidence="1">Probable chemoreceptor glutamine deamidase CheD 1</fullName>
        <ecNumber evidence="1">3.5.1.44</ecNumber>
    </recommendedName>
</protein>
<gene>
    <name evidence="1" type="primary">cheD1</name>
    <name type="ordered locus">MM_0326</name>
</gene>
<evidence type="ECO:0000255" key="1">
    <source>
        <dbReference type="HAMAP-Rule" id="MF_01440"/>
    </source>
</evidence>
<sequence>MSSVFLFISNESGKAIFLISGDVLVKSFCSLSDTCPFQDSCRSCSLLNAAKNYLAGTAPDSRIKTLDGELSAGIGEYKIGKNVLLKVMGLGSCIGVILSDVSTGICGIAHVLLPGASDRGETKYAETAIEKMVEDMVKMGARRSRITAKFAGGAQVFKHMSLDILKIGDRNAISVEETLIKKNIPILAKDVGGEVGRNVIFNPADGSMIVKYTAKGEVLWL</sequence>
<reference key="1">
    <citation type="journal article" date="2002" name="J. Mol. Microbiol. Biotechnol.">
        <title>The genome of Methanosarcina mazei: evidence for lateral gene transfer between Bacteria and Archaea.</title>
        <authorList>
            <person name="Deppenmeier U."/>
            <person name="Johann A."/>
            <person name="Hartsch T."/>
            <person name="Merkl R."/>
            <person name="Schmitz R.A."/>
            <person name="Martinez-Arias R."/>
            <person name="Henne A."/>
            <person name="Wiezer A."/>
            <person name="Baeumer S."/>
            <person name="Jacobi C."/>
            <person name="Brueggemann H."/>
            <person name="Lienard T."/>
            <person name="Christmann A."/>
            <person name="Boemecke M."/>
            <person name="Steckel S."/>
            <person name="Bhattacharyya A."/>
            <person name="Lykidis A."/>
            <person name="Overbeek R."/>
            <person name="Klenk H.-P."/>
            <person name="Gunsalus R.P."/>
            <person name="Fritz H.-J."/>
            <person name="Gottschalk G."/>
        </authorList>
    </citation>
    <scope>NUCLEOTIDE SEQUENCE [LARGE SCALE GENOMIC DNA]</scope>
    <source>
        <strain>ATCC BAA-159 / DSM 3647 / Goe1 / Go1 / JCM 11833 / OCM 88</strain>
    </source>
</reference>
<accession>Q8Q012</accession>
<feature type="chain" id="PRO_0000251092" description="Probable chemoreceptor glutamine deamidase CheD 1">
    <location>
        <begin position="1"/>
        <end position="221"/>
    </location>
</feature>
<dbReference type="EC" id="3.5.1.44" evidence="1"/>
<dbReference type="EMBL" id="AE008384">
    <property type="protein sequence ID" value="AAM30022.1"/>
    <property type="molecule type" value="Genomic_DNA"/>
</dbReference>
<dbReference type="RefSeq" id="WP_011032280.1">
    <property type="nucleotide sequence ID" value="NC_003901.1"/>
</dbReference>
<dbReference type="SMR" id="Q8Q012"/>
<dbReference type="KEGG" id="mma:MM_0326"/>
<dbReference type="PATRIC" id="fig|192952.21.peg.398"/>
<dbReference type="eggNOG" id="arCOG02380">
    <property type="taxonomic scope" value="Archaea"/>
</dbReference>
<dbReference type="HOGENOM" id="CLU_087854_2_0_2"/>
<dbReference type="Proteomes" id="UP000000595">
    <property type="component" value="Chromosome"/>
</dbReference>
<dbReference type="GO" id="GO:0050568">
    <property type="term" value="F:protein-glutamine glutaminase activity"/>
    <property type="evidence" value="ECO:0007669"/>
    <property type="project" value="UniProtKB-UniRule"/>
</dbReference>
<dbReference type="GO" id="GO:0006935">
    <property type="term" value="P:chemotaxis"/>
    <property type="evidence" value="ECO:0007669"/>
    <property type="project" value="UniProtKB-UniRule"/>
</dbReference>
<dbReference type="CDD" id="cd16352">
    <property type="entry name" value="CheD"/>
    <property type="match status" value="1"/>
</dbReference>
<dbReference type="Gene3D" id="3.30.1330.200">
    <property type="match status" value="1"/>
</dbReference>
<dbReference type="HAMAP" id="MF_01440">
    <property type="entry name" value="CheD"/>
    <property type="match status" value="1"/>
</dbReference>
<dbReference type="InterPro" id="IPR038592">
    <property type="entry name" value="CheD-like_sf"/>
</dbReference>
<dbReference type="InterPro" id="IPR005659">
    <property type="entry name" value="Chemorcpt_Glu_NH3ase_CheD"/>
</dbReference>
<dbReference type="InterPro" id="IPR011324">
    <property type="entry name" value="Cytotoxic_necrot_fac-like_cat"/>
</dbReference>
<dbReference type="PANTHER" id="PTHR35147">
    <property type="entry name" value="CHEMORECEPTOR GLUTAMINE DEAMIDASE CHED-RELATED"/>
    <property type="match status" value="1"/>
</dbReference>
<dbReference type="PANTHER" id="PTHR35147:SF1">
    <property type="entry name" value="CHEMORECEPTOR GLUTAMINE DEAMIDASE CHED-RELATED"/>
    <property type="match status" value="1"/>
</dbReference>
<dbReference type="Pfam" id="PF03975">
    <property type="entry name" value="CheD"/>
    <property type="match status" value="1"/>
</dbReference>
<dbReference type="SUPFAM" id="SSF64438">
    <property type="entry name" value="CNF1/YfiH-like putative cysteine hydrolases"/>
    <property type="match status" value="1"/>
</dbReference>